<name>SYR_HERAR</name>
<gene>
    <name evidence="1" type="primary">argS</name>
    <name type="ordered locus">HEAR0093</name>
</gene>
<keyword id="KW-0030">Aminoacyl-tRNA synthetase</keyword>
<keyword id="KW-0067">ATP-binding</keyword>
<keyword id="KW-0963">Cytoplasm</keyword>
<keyword id="KW-0436">Ligase</keyword>
<keyword id="KW-0547">Nucleotide-binding</keyword>
<keyword id="KW-0648">Protein biosynthesis</keyword>
<keyword id="KW-1185">Reference proteome</keyword>
<accession>A4G1E2</accession>
<reference key="1">
    <citation type="journal article" date="2007" name="PLoS Genet.">
        <title>A tale of two oxidation states: bacterial colonization of arsenic-rich environments.</title>
        <authorList>
            <person name="Muller D."/>
            <person name="Medigue C."/>
            <person name="Koechler S."/>
            <person name="Barbe V."/>
            <person name="Barakat M."/>
            <person name="Talla E."/>
            <person name="Bonnefoy V."/>
            <person name="Krin E."/>
            <person name="Arsene-Ploetze F."/>
            <person name="Carapito C."/>
            <person name="Chandler M."/>
            <person name="Cournoyer B."/>
            <person name="Cruveiller S."/>
            <person name="Dossat C."/>
            <person name="Duval S."/>
            <person name="Heymann M."/>
            <person name="Leize E."/>
            <person name="Lieutaud A."/>
            <person name="Lievremont D."/>
            <person name="Makita Y."/>
            <person name="Mangenot S."/>
            <person name="Nitschke W."/>
            <person name="Ortet P."/>
            <person name="Perdrial N."/>
            <person name="Schoepp B."/>
            <person name="Siguier P."/>
            <person name="Simeonova D.D."/>
            <person name="Rouy Z."/>
            <person name="Segurens B."/>
            <person name="Turlin E."/>
            <person name="Vallenet D."/>
            <person name="van Dorsselaer A."/>
            <person name="Weiss S."/>
            <person name="Weissenbach J."/>
            <person name="Lett M.-C."/>
            <person name="Danchin A."/>
            <person name="Bertin P.N."/>
        </authorList>
    </citation>
    <scope>NUCLEOTIDE SEQUENCE [LARGE SCALE GENOMIC DNA]</scope>
    <source>
        <strain>ULPAs1</strain>
    </source>
</reference>
<feature type="chain" id="PRO_1000018042" description="Arginine--tRNA ligase">
    <location>
        <begin position="1"/>
        <end position="577"/>
    </location>
</feature>
<feature type="short sequence motif" description="'HIGH' region">
    <location>
        <begin position="132"/>
        <end position="142"/>
    </location>
</feature>
<proteinExistence type="inferred from homology"/>
<sequence>MLAAQKQRITELFQAAVAPLVAGTELNPTVTLERPRDPSHGDVACNLAMQIAKPLKKNPREVAQVLVAALLDNPANRDLIESAEIAGPGFINLRLTPASRQSVVKTVLQQGAQYGKSNLGAGKKVIIEFVSANPTGPLHVGHGRQGALGDAMSSLFDAQGYAVTREFYYNDAGVQIATLATSVQARARGLKPGAEGWPESAYNGDYIQDIANDFLAKKTVSASDGLPVTASGDIDDIESIRAFAVAYLRREQDLDLQAFGVKFDNYYLESSLYNDGKVAATVDALIKADKTYELDGALWLRTTDYRDDKDRVMKKSDGTYTYFVPDVAYHTVKWQRGFTQAINVQGSDHHGTIARVRAGLQALDIGIPQGYPDYVLHKMVTVMRNGEEVKISKRAGSYVTLRDLIEWSNGETVEGQERDLTRGRDAVRFFLISRKADTEFVFDVDVALSQSDENPVYYVQYAHARICSVLAQWTDGDEAALLDVDLSPLTAPREAALLAKLAEYPEALQRALEELGPHQVAFYLRDLAAELHSYYNAERVLVDDVALKMARLTLMHATRQVLRNGLALIGVSAPARM</sequence>
<dbReference type="EC" id="6.1.1.19" evidence="1"/>
<dbReference type="EMBL" id="CU207211">
    <property type="protein sequence ID" value="CAL60329.1"/>
    <property type="molecule type" value="Genomic_DNA"/>
</dbReference>
<dbReference type="SMR" id="A4G1E2"/>
<dbReference type="STRING" id="204773.HEAR0093"/>
<dbReference type="KEGG" id="har:HEAR0093"/>
<dbReference type="eggNOG" id="COG0018">
    <property type="taxonomic scope" value="Bacteria"/>
</dbReference>
<dbReference type="HOGENOM" id="CLU_006406_0_1_4"/>
<dbReference type="OrthoDB" id="9803211at2"/>
<dbReference type="Proteomes" id="UP000006697">
    <property type="component" value="Chromosome"/>
</dbReference>
<dbReference type="GO" id="GO:0005737">
    <property type="term" value="C:cytoplasm"/>
    <property type="evidence" value="ECO:0007669"/>
    <property type="project" value="UniProtKB-SubCell"/>
</dbReference>
<dbReference type="GO" id="GO:0004814">
    <property type="term" value="F:arginine-tRNA ligase activity"/>
    <property type="evidence" value="ECO:0007669"/>
    <property type="project" value="UniProtKB-UniRule"/>
</dbReference>
<dbReference type="GO" id="GO:0005524">
    <property type="term" value="F:ATP binding"/>
    <property type="evidence" value="ECO:0007669"/>
    <property type="project" value="UniProtKB-UniRule"/>
</dbReference>
<dbReference type="GO" id="GO:0006420">
    <property type="term" value="P:arginyl-tRNA aminoacylation"/>
    <property type="evidence" value="ECO:0007669"/>
    <property type="project" value="UniProtKB-UniRule"/>
</dbReference>
<dbReference type="CDD" id="cd07956">
    <property type="entry name" value="Anticodon_Ia_Arg"/>
    <property type="match status" value="1"/>
</dbReference>
<dbReference type="CDD" id="cd00671">
    <property type="entry name" value="ArgRS_core"/>
    <property type="match status" value="1"/>
</dbReference>
<dbReference type="FunFam" id="1.10.730.10:FF:000008">
    <property type="entry name" value="Arginine--tRNA ligase"/>
    <property type="match status" value="1"/>
</dbReference>
<dbReference type="FunFam" id="3.40.50.620:FF:000062">
    <property type="entry name" value="Arginine--tRNA ligase"/>
    <property type="match status" value="1"/>
</dbReference>
<dbReference type="Gene3D" id="3.30.1360.70">
    <property type="entry name" value="Arginyl tRNA synthetase N-terminal domain"/>
    <property type="match status" value="1"/>
</dbReference>
<dbReference type="Gene3D" id="3.40.50.620">
    <property type="entry name" value="HUPs"/>
    <property type="match status" value="1"/>
</dbReference>
<dbReference type="Gene3D" id="1.10.730.10">
    <property type="entry name" value="Isoleucyl-tRNA Synthetase, Domain 1"/>
    <property type="match status" value="1"/>
</dbReference>
<dbReference type="HAMAP" id="MF_00123">
    <property type="entry name" value="Arg_tRNA_synth"/>
    <property type="match status" value="1"/>
</dbReference>
<dbReference type="InterPro" id="IPR001412">
    <property type="entry name" value="aa-tRNA-synth_I_CS"/>
</dbReference>
<dbReference type="InterPro" id="IPR001278">
    <property type="entry name" value="Arg-tRNA-ligase"/>
</dbReference>
<dbReference type="InterPro" id="IPR005148">
    <property type="entry name" value="Arg-tRNA-synth_N"/>
</dbReference>
<dbReference type="InterPro" id="IPR036695">
    <property type="entry name" value="Arg-tRNA-synth_N_sf"/>
</dbReference>
<dbReference type="InterPro" id="IPR035684">
    <property type="entry name" value="ArgRS_core"/>
</dbReference>
<dbReference type="InterPro" id="IPR008909">
    <property type="entry name" value="DALR_anticod-bd"/>
</dbReference>
<dbReference type="InterPro" id="IPR014729">
    <property type="entry name" value="Rossmann-like_a/b/a_fold"/>
</dbReference>
<dbReference type="InterPro" id="IPR009080">
    <property type="entry name" value="tRNAsynth_Ia_anticodon-bd"/>
</dbReference>
<dbReference type="NCBIfam" id="TIGR00456">
    <property type="entry name" value="argS"/>
    <property type="match status" value="1"/>
</dbReference>
<dbReference type="PANTHER" id="PTHR11956:SF5">
    <property type="entry name" value="ARGININE--TRNA LIGASE, CYTOPLASMIC"/>
    <property type="match status" value="1"/>
</dbReference>
<dbReference type="PANTHER" id="PTHR11956">
    <property type="entry name" value="ARGINYL-TRNA SYNTHETASE"/>
    <property type="match status" value="1"/>
</dbReference>
<dbReference type="Pfam" id="PF03485">
    <property type="entry name" value="Arg_tRNA_synt_N"/>
    <property type="match status" value="1"/>
</dbReference>
<dbReference type="Pfam" id="PF05746">
    <property type="entry name" value="DALR_1"/>
    <property type="match status" value="1"/>
</dbReference>
<dbReference type="Pfam" id="PF00750">
    <property type="entry name" value="tRNA-synt_1d"/>
    <property type="match status" value="1"/>
</dbReference>
<dbReference type="PRINTS" id="PR01038">
    <property type="entry name" value="TRNASYNTHARG"/>
</dbReference>
<dbReference type="SMART" id="SM01016">
    <property type="entry name" value="Arg_tRNA_synt_N"/>
    <property type="match status" value="1"/>
</dbReference>
<dbReference type="SMART" id="SM00836">
    <property type="entry name" value="DALR_1"/>
    <property type="match status" value="1"/>
</dbReference>
<dbReference type="SUPFAM" id="SSF47323">
    <property type="entry name" value="Anticodon-binding domain of a subclass of class I aminoacyl-tRNA synthetases"/>
    <property type="match status" value="1"/>
</dbReference>
<dbReference type="SUPFAM" id="SSF55190">
    <property type="entry name" value="Arginyl-tRNA synthetase (ArgRS), N-terminal 'additional' domain"/>
    <property type="match status" value="1"/>
</dbReference>
<dbReference type="SUPFAM" id="SSF52374">
    <property type="entry name" value="Nucleotidylyl transferase"/>
    <property type="match status" value="1"/>
</dbReference>
<dbReference type="PROSITE" id="PS00178">
    <property type="entry name" value="AA_TRNA_LIGASE_I"/>
    <property type="match status" value="1"/>
</dbReference>
<comment type="catalytic activity">
    <reaction evidence="1">
        <text>tRNA(Arg) + L-arginine + ATP = L-arginyl-tRNA(Arg) + AMP + diphosphate</text>
        <dbReference type="Rhea" id="RHEA:20301"/>
        <dbReference type="Rhea" id="RHEA-COMP:9658"/>
        <dbReference type="Rhea" id="RHEA-COMP:9673"/>
        <dbReference type="ChEBI" id="CHEBI:30616"/>
        <dbReference type="ChEBI" id="CHEBI:32682"/>
        <dbReference type="ChEBI" id="CHEBI:33019"/>
        <dbReference type="ChEBI" id="CHEBI:78442"/>
        <dbReference type="ChEBI" id="CHEBI:78513"/>
        <dbReference type="ChEBI" id="CHEBI:456215"/>
        <dbReference type="EC" id="6.1.1.19"/>
    </reaction>
</comment>
<comment type="subunit">
    <text evidence="1">Monomer.</text>
</comment>
<comment type="subcellular location">
    <subcellularLocation>
        <location evidence="1">Cytoplasm</location>
    </subcellularLocation>
</comment>
<comment type="similarity">
    <text evidence="1">Belongs to the class-I aminoacyl-tRNA synthetase family.</text>
</comment>
<protein>
    <recommendedName>
        <fullName evidence="1">Arginine--tRNA ligase</fullName>
        <ecNumber evidence="1">6.1.1.19</ecNumber>
    </recommendedName>
    <alternativeName>
        <fullName evidence="1">Arginyl-tRNA synthetase</fullName>
        <shortName evidence="1">ArgRS</shortName>
    </alternativeName>
</protein>
<organism>
    <name type="scientific">Herminiimonas arsenicoxydans</name>
    <dbReference type="NCBI Taxonomy" id="204773"/>
    <lineage>
        <taxon>Bacteria</taxon>
        <taxon>Pseudomonadati</taxon>
        <taxon>Pseudomonadota</taxon>
        <taxon>Betaproteobacteria</taxon>
        <taxon>Burkholderiales</taxon>
        <taxon>Oxalobacteraceae</taxon>
        <taxon>Herminiimonas</taxon>
    </lineage>
</organism>
<evidence type="ECO:0000255" key="1">
    <source>
        <dbReference type="HAMAP-Rule" id="MF_00123"/>
    </source>
</evidence>